<comment type="function">
    <text evidence="1">An accessory protein needed during the final step in the assembly of 30S ribosomal subunit, possibly for assembly of the head region. Essential for efficient processing of 16S rRNA. May be needed both before and after RbfA during the maturation of 16S rRNA. It has affinity for free ribosomal 30S subunits but not for 70S ribosomes.</text>
</comment>
<comment type="subunit">
    <text evidence="1">Binds ribosomal protein uS19.</text>
</comment>
<comment type="subcellular location">
    <subcellularLocation>
        <location evidence="1">Cytoplasm</location>
    </subcellularLocation>
</comment>
<comment type="domain">
    <text evidence="1">The PRC barrel domain binds ribosomal protein uS19.</text>
</comment>
<comment type="similarity">
    <text evidence="1">Belongs to the RimM family.</text>
</comment>
<name>RIMM_PHOV8</name>
<sequence>MIKKDEVFKIGIFNKPHGVKGEISFTFTDDIFDRVECEYLVCLLDGIFVPFFIEEYRFRSDTTALVKLEGVDTSEKARMFTNVEVYFPKKYVGEEEDSDDIPTWNYFIGFKVEDVNHGELGEIVAVDDSTMNVLFAIEKGGEELLLPAHEEFITKLDKKKRLLTVEVPDGLI</sequence>
<protein>
    <recommendedName>
        <fullName evidence="1">Ribosome maturation factor RimM</fullName>
    </recommendedName>
</protein>
<keyword id="KW-0143">Chaperone</keyword>
<keyword id="KW-0963">Cytoplasm</keyword>
<keyword id="KW-0690">Ribosome biogenesis</keyword>
<keyword id="KW-0698">rRNA processing</keyword>
<dbReference type="EMBL" id="CP000139">
    <property type="protein sequence ID" value="ABR39330.1"/>
    <property type="molecule type" value="Genomic_DNA"/>
</dbReference>
<dbReference type="RefSeq" id="WP_007831330.1">
    <property type="nucleotide sequence ID" value="NC_009614.1"/>
</dbReference>
<dbReference type="SMR" id="A6L0W6"/>
<dbReference type="STRING" id="435590.BVU_1649"/>
<dbReference type="PaxDb" id="435590-BVU_1649"/>
<dbReference type="GeneID" id="93445449"/>
<dbReference type="KEGG" id="bvu:BVU_1649"/>
<dbReference type="eggNOG" id="COG0806">
    <property type="taxonomic scope" value="Bacteria"/>
</dbReference>
<dbReference type="HOGENOM" id="CLU_077636_4_1_10"/>
<dbReference type="BioCyc" id="BVUL435590:G1G59-1735-MONOMER"/>
<dbReference type="Proteomes" id="UP000002861">
    <property type="component" value="Chromosome"/>
</dbReference>
<dbReference type="GO" id="GO:0005737">
    <property type="term" value="C:cytoplasm"/>
    <property type="evidence" value="ECO:0007669"/>
    <property type="project" value="UniProtKB-SubCell"/>
</dbReference>
<dbReference type="GO" id="GO:0005840">
    <property type="term" value="C:ribosome"/>
    <property type="evidence" value="ECO:0007669"/>
    <property type="project" value="InterPro"/>
</dbReference>
<dbReference type="GO" id="GO:0043022">
    <property type="term" value="F:ribosome binding"/>
    <property type="evidence" value="ECO:0007669"/>
    <property type="project" value="InterPro"/>
</dbReference>
<dbReference type="GO" id="GO:0042274">
    <property type="term" value="P:ribosomal small subunit biogenesis"/>
    <property type="evidence" value="ECO:0007669"/>
    <property type="project" value="UniProtKB-UniRule"/>
</dbReference>
<dbReference type="GO" id="GO:0006364">
    <property type="term" value="P:rRNA processing"/>
    <property type="evidence" value="ECO:0007669"/>
    <property type="project" value="UniProtKB-UniRule"/>
</dbReference>
<dbReference type="Gene3D" id="2.30.30.240">
    <property type="entry name" value="PRC-barrel domain"/>
    <property type="match status" value="1"/>
</dbReference>
<dbReference type="Gene3D" id="2.40.30.60">
    <property type="entry name" value="RimM"/>
    <property type="match status" value="1"/>
</dbReference>
<dbReference type="HAMAP" id="MF_00014">
    <property type="entry name" value="Ribosome_mat_RimM"/>
    <property type="match status" value="1"/>
</dbReference>
<dbReference type="InterPro" id="IPR011033">
    <property type="entry name" value="PRC_barrel-like_sf"/>
</dbReference>
<dbReference type="InterPro" id="IPR056792">
    <property type="entry name" value="PRC_RimM"/>
</dbReference>
<dbReference type="InterPro" id="IPR011961">
    <property type="entry name" value="RimM"/>
</dbReference>
<dbReference type="InterPro" id="IPR002676">
    <property type="entry name" value="RimM_N"/>
</dbReference>
<dbReference type="InterPro" id="IPR036976">
    <property type="entry name" value="RimM_N_sf"/>
</dbReference>
<dbReference type="InterPro" id="IPR009000">
    <property type="entry name" value="Transl_B-barrel_sf"/>
</dbReference>
<dbReference type="NCBIfam" id="TIGR02273">
    <property type="entry name" value="16S_RimM"/>
    <property type="match status" value="1"/>
</dbReference>
<dbReference type="PANTHER" id="PTHR33692">
    <property type="entry name" value="RIBOSOME MATURATION FACTOR RIMM"/>
    <property type="match status" value="1"/>
</dbReference>
<dbReference type="PANTHER" id="PTHR33692:SF1">
    <property type="entry name" value="RIBOSOME MATURATION FACTOR RIMM"/>
    <property type="match status" value="1"/>
</dbReference>
<dbReference type="Pfam" id="PF24986">
    <property type="entry name" value="PRC_RimM"/>
    <property type="match status" value="1"/>
</dbReference>
<dbReference type="Pfam" id="PF01782">
    <property type="entry name" value="RimM"/>
    <property type="match status" value="1"/>
</dbReference>
<dbReference type="SUPFAM" id="SSF50346">
    <property type="entry name" value="PRC-barrel domain"/>
    <property type="match status" value="1"/>
</dbReference>
<dbReference type="SUPFAM" id="SSF50447">
    <property type="entry name" value="Translation proteins"/>
    <property type="match status" value="1"/>
</dbReference>
<accession>A6L0W6</accession>
<gene>
    <name evidence="1" type="primary">rimM</name>
    <name type="ordered locus">BVU_1649</name>
</gene>
<evidence type="ECO:0000255" key="1">
    <source>
        <dbReference type="HAMAP-Rule" id="MF_00014"/>
    </source>
</evidence>
<proteinExistence type="inferred from homology"/>
<organism>
    <name type="scientific">Phocaeicola vulgatus (strain ATCC 8482 / DSM 1447 / JCM 5826 / CCUG 4940 / NBRC 14291 / NCTC 11154)</name>
    <name type="common">Bacteroides vulgatus</name>
    <dbReference type="NCBI Taxonomy" id="435590"/>
    <lineage>
        <taxon>Bacteria</taxon>
        <taxon>Pseudomonadati</taxon>
        <taxon>Bacteroidota</taxon>
        <taxon>Bacteroidia</taxon>
        <taxon>Bacteroidales</taxon>
        <taxon>Bacteroidaceae</taxon>
        <taxon>Phocaeicola</taxon>
    </lineage>
</organism>
<feature type="chain" id="PRO_0000351722" description="Ribosome maturation factor RimM">
    <location>
        <begin position="1"/>
        <end position="172"/>
    </location>
</feature>
<feature type="domain" description="PRC barrel" evidence="1">
    <location>
        <begin position="99"/>
        <end position="171"/>
    </location>
</feature>
<reference key="1">
    <citation type="journal article" date="2007" name="PLoS Biol.">
        <title>Evolution of symbiotic bacteria in the distal human intestine.</title>
        <authorList>
            <person name="Xu J."/>
            <person name="Mahowald M.A."/>
            <person name="Ley R.E."/>
            <person name="Lozupone C.A."/>
            <person name="Hamady M."/>
            <person name="Martens E.C."/>
            <person name="Henrissat B."/>
            <person name="Coutinho P.M."/>
            <person name="Minx P."/>
            <person name="Latreille P."/>
            <person name="Cordum H."/>
            <person name="Van Brunt A."/>
            <person name="Kim K."/>
            <person name="Fulton R.S."/>
            <person name="Fulton L.A."/>
            <person name="Clifton S.W."/>
            <person name="Wilson R.K."/>
            <person name="Knight R.D."/>
            <person name="Gordon J.I."/>
        </authorList>
    </citation>
    <scope>NUCLEOTIDE SEQUENCE [LARGE SCALE GENOMIC DNA]</scope>
    <source>
        <strain>ATCC 8482 / DSM 1447 / JCM 5826 / CCUG 4940 / NBRC 14291 / NCTC 11154</strain>
    </source>
</reference>